<dbReference type="EC" id="3.1.-.-" evidence="1"/>
<dbReference type="EMBL" id="L77117">
    <property type="protein sequence ID" value="AAB98159.1"/>
    <property type="molecule type" value="Genomic_DNA"/>
</dbReference>
<dbReference type="PIR" id="G64321">
    <property type="entry name" value="G64321"/>
</dbReference>
<dbReference type="RefSeq" id="WP_010869669.1">
    <property type="nucleotide sequence ID" value="NC_000909.1"/>
</dbReference>
<dbReference type="SMR" id="Q57638"/>
<dbReference type="FunCoup" id="Q57638">
    <property type="interactions" value="115"/>
</dbReference>
<dbReference type="STRING" id="243232.MJ_0174"/>
<dbReference type="PaxDb" id="243232-MJ_0174"/>
<dbReference type="EnsemblBacteria" id="AAB98159">
    <property type="protein sequence ID" value="AAB98159"/>
    <property type="gene ID" value="MJ_0174"/>
</dbReference>
<dbReference type="GeneID" id="1451021"/>
<dbReference type="KEGG" id="mja:MJ_0174"/>
<dbReference type="eggNOG" id="arCOG01741">
    <property type="taxonomic scope" value="Archaea"/>
</dbReference>
<dbReference type="HOGENOM" id="CLU_023334_0_0_2"/>
<dbReference type="InParanoid" id="Q57638"/>
<dbReference type="OrthoDB" id="31300at2157"/>
<dbReference type="PhylomeDB" id="Q57638"/>
<dbReference type="Proteomes" id="UP000000805">
    <property type="component" value="Chromosome"/>
</dbReference>
<dbReference type="GO" id="GO:0005829">
    <property type="term" value="C:cytosol"/>
    <property type="evidence" value="ECO:0000318"/>
    <property type="project" value="GO_Central"/>
</dbReference>
<dbReference type="GO" id="GO:0018444">
    <property type="term" value="C:translation release factor complex"/>
    <property type="evidence" value="ECO:0000318"/>
    <property type="project" value="GO_Central"/>
</dbReference>
<dbReference type="GO" id="GO:0004519">
    <property type="term" value="F:endonuclease activity"/>
    <property type="evidence" value="ECO:0007669"/>
    <property type="project" value="UniProtKB-UniRule"/>
</dbReference>
<dbReference type="GO" id="GO:0046872">
    <property type="term" value="F:metal ion binding"/>
    <property type="evidence" value="ECO:0007669"/>
    <property type="project" value="UniProtKB-UniRule"/>
</dbReference>
<dbReference type="GO" id="GO:1990825">
    <property type="term" value="F:sequence-specific mRNA binding"/>
    <property type="evidence" value="ECO:0000318"/>
    <property type="project" value="GO_Central"/>
</dbReference>
<dbReference type="GO" id="GO:0016149">
    <property type="term" value="F:translation release factor activity, codon specific"/>
    <property type="evidence" value="ECO:0000318"/>
    <property type="project" value="GO_Central"/>
</dbReference>
<dbReference type="GO" id="GO:0070966">
    <property type="term" value="P:nuclear-transcribed mRNA catabolic process, no-go decay"/>
    <property type="evidence" value="ECO:0007669"/>
    <property type="project" value="InterPro"/>
</dbReference>
<dbReference type="GO" id="GO:0070481">
    <property type="term" value="P:nuclear-transcribed mRNA catabolic process, non-stop decay"/>
    <property type="evidence" value="ECO:0007669"/>
    <property type="project" value="InterPro"/>
</dbReference>
<dbReference type="GO" id="GO:0071025">
    <property type="term" value="P:RNA surveillance"/>
    <property type="evidence" value="ECO:0007669"/>
    <property type="project" value="InterPro"/>
</dbReference>
<dbReference type="FunFam" id="2.30.30.870:FF:000002">
    <property type="entry name" value="Protein pelota homolog"/>
    <property type="match status" value="1"/>
</dbReference>
<dbReference type="FunFam" id="3.30.420.60:FF:000005">
    <property type="entry name" value="Protein pelota homolog"/>
    <property type="match status" value="1"/>
</dbReference>
<dbReference type="Gene3D" id="3.30.1330.30">
    <property type="match status" value="1"/>
</dbReference>
<dbReference type="Gene3D" id="3.30.420.60">
    <property type="entry name" value="eRF1 domain 2"/>
    <property type="match status" value="1"/>
</dbReference>
<dbReference type="Gene3D" id="2.30.30.870">
    <property type="entry name" value="Pelota, domain A"/>
    <property type="match status" value="1"/>
</dbReference>
<dbReference type="HAMAP" id="MF_01853">
    <property type="entry name" value="PelO"/>
    <property type="match status" value="1"/>
</dbReference>
<dbReference type="InterPro" id="IPR042226">
    <property type="entry name" value="eFR1_2_sf"/>
</dbReference>
<dbReference type="InterPro" id="IPR005140">
    <property type="entry name" value="eRF1_1_Pelota"/>
</dbReference>
<dbReference type="InterPro" id="IPR005141">
    <property type="entry name" value="eRF1_2"/>
</dbReference>
<dbReference type="InterPro" id="IPR005142">
    <property type="entry name" value="eRF1_3"/>
</dbReference>
<dbReference type="InterPro" id="IPR038069">
    <property type="entry name" value="Pelota/DOM34_N"/>
</dbReference>
<dbReference type="InterPro" id="IPR023521">
    <property type="entry name" value="Pelota_arc"/>
</dbReference>
<dbReference type="InterPro" id="IPR029064">
    <property type="entry name" value="Ribosomal_eL30-like_sf"/>
</dbReference>
<dbReference type="InterPro" id="IPR004405">
    <property type="entry name" value="Transl-rel_pelota"/>
</dbReference>
<dbReference type="NCBIfam" id="TIGR00111">
    <property type="entry name" value="pelota"/>
    <property type="match status" value="1"/>
</dbReference>
<dbReference type="PANTHER" id="PTHR10853">
    <property type="entry name" value="PELOTA"/>
    <property type="match status" value="1"/>
</dbReference>
<dbReference type="PANTHER" id="PTHR10853:SF0">
    <property type="entry name" value="PROTEIN PELOTA HOMOLOG"/>
    <property type="match status" value="1"/>
</dbReference>
<dbReference type="Pfam" id="PF03463">
    <property type="entry name" value="eRF1_1"/>
    <property type="match status" value="1"/>
</dbReference>
<dbReference type="Pfam" id="PF03464">
    <property type="entry name" value="eRF1_2"/>
    <property type="match status" value="1"/>
</dbReference>
<dbReference type="Pfam" id="PF03465">
    <property type="entry name" value="eRF1_3"/>
    <property type="match status" value="1"/>
</dbReference>
<dbReference type="SMART" id="SM01194">
    <property type="entry name" value="eRF1_1"/>
    <property type="match status" value="1"/>
</dbReference>
<dbReference type="SUPFAM" id="SSF159065">
    <property type="entry name" value="Dom34/Pelota N-terminal domain-like"/>
    <property type="match status" value="1"/>
</dbReference>
<dbReference type="SUPFAM" id="SSF55315">
    <property type="entry name" value="L30e-like"/>
    <property type="match status" value="1"/>
</dbReference>
<dbReference type="SUPFAM" id="SSF53137">
    <property type="entry name" value="Translational machinery components"/>
    <property type="match status" value="1"/>
</dbReference>
<comment type="function">
    <text evidence="1">May function in recognizing stalled ribosomes, interact with stem-loop structures in stalled mRNA molecules, and effect endonucleolytic cleavage of the mRNA. May play a role in the release non-functional ribosomes and degradation of damaged mRNAs. Has endoribonuclease activity.</text>
</comment>
<comment type="cofactor">
    <cofactor evidence="1">
        <name>a divalent metal cation</name>
        <dbReference type="ChEBI" id="CHEBI:60240"/>
    </cofactor>
</comment>
<comment type="subunit">
    <text evidence="1">Monomer.</text>
</comment>
<comment type="subcellular location">
    <subcellularLocation>
        <location evidence="1">Cytoplasm</location>
    </subcellularLocation>
</comment>
<comment type="domain">
    <text evidence="1">The N-terminal domain has the RNA-binding Sm fold. It harbors the endoribonuclease activity.</text>
</comment>
<comment type="similarity">
    <text evidence="1">Belongs to the eukaryotic release factor 1 family. Pelota subfamily.</text>
</comment>
<feature type="chain" id="PRO_0000143193" description="Protein pelota homolog">
    <location>
        <begin position="1"/>
        <end position="347"/>
    </location>
</feature>
<reference key="1">
    <citation type="journal article" date="1996" name="Science">
        <title>Complete genome sequence of the methanogenic archaeon, Methanococcus jannaschii.</title>
        <authorList>
            <person name="Bult C.J."/>
            <person name="White O."/>
            <person name="Olsen G.J."/>
            <person name="Zhou L."/>
            <person name="Fleischmann R.D."/>
            <person name="Sutton G.G."/>
            <person name="Blake J.A."/>
            <person name="FitzGerald L.M."/>
            <person name="Clayton R.A."/>
            <person name="Gocayne J.D."/>
            <person name="Kerlavage A.R."/>
            <person name="Dougherty B.A."/>
            <person name="Tomb J.-F."/>
            <person name="Adams M.D."/>
            <person name="Reich C.I."/>
            <person name="Overbeek R."/>
            <person name="Kirkness E.F."/>
            <person name="Weinstock K.G."/>
            <person name="Merrick J.M."/>
            <person name="Glodek A."/>
            <person name="Scott J.L."/>
            <person name="Geoghagen N.S.M."/>
            <person name="Weidman J.F."/>
            <person name="Fuhrmann J.L."/>
            <person name="Nguyen D."/>
            <person name="Utterback T.R."/>
            <person name="Kelley J.M."/>
            <person name="Peterson J.D."/>
            <person name="Sadow P.W."/>
            <person name="Hanna M.C."/>
            <person name="Cotton M.D."/>
            <person name="Roberts K.M."/>
            <person name="Hurst M.A."/>
            <person name="Kaine B.P."/>
            <person name="Borodovsky M."/>
            <person name="Klenk H.-P."/>
            <person name="Fraser C.M."/>
            <person name="Smith H.O."/>
            <person name="Woese C.R."/>
            <person name="Venter J.C."/>
        </authorList>
    </citation>
    <scope>NUCLEOTIDE SEQUENCE [LARGE SCALE GENOMIC DNA]</scope>
    <source>
        <strain>ATCC 43067 / DSM 2661 / JAL-1 / JCM 10045 / NBRC 100440</strain>
    </source>
</reference>
<sequence>MKIIEEIPQKNIIKLMPENLDDLWVLYNIIEEGDKIFAVTERRVQDKGDVIRADRGAKRKMFLGIEVKNVEFDENTKRVRILGTIIHGPDDVPLGSHHTIEIKPFDELSIEKNWKKWQIERIKEAIESSKRPKVLVVVMDDEEADIFEVRDYSIKEICSIKSHTSKKLDYKINEELKKEYYHEIAKVLSEYDVDNILVAGPGFAKNSFYNFISSQYPELKNKIVVESISTTSRAGLNEVIKRGIINRIYAESRVAKETQLIEKLLEEIAKKGLAVYGIDEVKKALEYSAIDTLLVSDSLVRNHEIEKIIDTTEEMGGKVVIVSSEHDAGKQLKALGGIAGLLRFPIE</sequence>
<organism>
    <name type="scientific">Methanocaldococcus jannaschii (strain ATCC 43067 / DSM 2661 / JAL-1 / JCM 10045 / NBRC 100440)</name>
    <name type="common">Methanococcus jannaschii</name>
    <dbReference type="NCBI Taxonomy" id="243232"/>
    <lineage>
        <taxon>Archaea</taxon>
        <taxon>Methanobacteriati</taxon>
        <taxon>Methanobacteriota</taxon>
        <taxon>Methanomada group</taxon>
        <taxon>Methanococci</taxon>
        <taxon>Methanococcales</taxon>
        <taxon>Methanocaldococcaceae</taxon>
        <taxon>Methanocaldococcus</taxon>
    </lineage>
</organism>
<evidence type="ECO:0000255" key="1">
    <source>
        <dbReference type="HAMAP-Rule" id="MF_01853"/>
    </source>
</evidence>
<accession>Q57638</accession>
<gene>
    <name evidence="1" type="primary">pelA</name>
    <name type="ordered locus">MJ0174</name>
</gene>
<protein>
    <recommendedName>
        <fullName evidence="1">Protein pelota homolog</fullName>
        <ecNumber evidence="1">3.1.-.-</ecNumber>
    </recommendedName>
</protein>
<name>PELO_METJA</name>
<proteinExistence type="inferred from homology"/>
<keyword id="KW-0963">Cytoplasm</keyword>
<keyword id="KW-0255">Endonuclease</keyword>
<keyword id="KW-0378">Hydrolase</keyword>
<keyword id="KW-0479">Metal-binding</keyword>
<keyword id="KW-0540">Nuclease</keyword>
<keyword id="KW-1185">Reference proteome</keyword>